<keyword id="KW-0012">Acyltransferase</keyword>
<keyword id="KW-0963">Cytoplasm</keyword>
<keyword id="KW-0275">Fatty acid biosynthesis</keyword>
<keyword id="KW-0276">Fatty acid metabolism</keyword>
<keyword id="KW-0444">Lipid biosynthesis</keyword>
<keyword id="KW-0443">Lipid metabolism</keyword>
<keyword id="KW-0511">Multifunctional enzyme</keyword>
<keyword id="KW-0808">Transferase</keyword>
<comment type="function">
    <text evidence="1">Catalyzes the condensation reaction of fatty acid synthesis by the addition to an acyl acceptor of two carbons from malonyl-ACP. Catalyzes the first condensation reaction which initiates fatty acid synthesis and may therefore play a role in governing the total rate of fatty acid production. Possesses both acetoacetyl-ACP synthase and acetyl transacylase activities. Its substrate specificity determines the biosynthesis of branched-chain and/or straight-chain of fatty acids.</text>
</comment>
<comment type="catalytic activity">
    <reaction evidence="1">
        <text>malonyl-[ACP] + acetyl-CoA + H(+) = 3-oxobutanoyl-[ACP] + CO2 + CoA</text>
        <dbReference type="Rhea" id="RHEA:12080"/>
        <dbReference type="Rhea" id="RHEA-COMP:9623"/>
        <dbReference type="Rhea" id="RHEA-COMP:9625"/>
        <dbReference type="ChEBI" id="CHEBI:15378"/>
        <dbReference type="ChEBI" id="CHEBI:16526"/>
        <dbReference type="ChEBI" id="CHEBI:57287"/>
        <dbReference type="ChEBI" id="CHEBI:57288"/>
        <dbReference type="ChEBI" id="CHEBI:78449"/>
        <dbReference type="ChEBI" id="CHEBI:78450"/>
        <dbReference type="EC" id="2.3.1.180"/>
    </reaction>
</comment>
<comment type="pathway">
    <text evidence="1">Lipid metabolism; fatty acid biosynthesis.</text>
</comment>
<comment type="subunit">
    <text evidence="1">Homodimer.</text>
</comment>
<comment type="subcellular location">
    <subcellularLocation>
        <location evidence="1">Cytoplasm</location>
    </subcellularLocation>
</comment>
<comment type="domain">
    <text evidence="1">The last Arg residue of the ACP-binding site is essential for the weak association between ACP/AcpP and FabH.</text>
</comment>
<comment type="similarity">
    <text evidence="1">Belongs to the thiolase-like superfamily. FabH family.</text>
</comment>
<accession>Q9ZMN0</accession>
<reference key="1">
    <citation type="journal article" date="1999" name="Nature">
        <title>Genomic sequence comparison of two unrelated isolates of the human gastric pathogen Helicobacter pylori.</title>
        <authorList>
            <person name="Alm R.A."/>
            <person name="Ling L.-S.L."/>
            <person name="Moir D.T."/>
            <person name="King B.L."/>
            <person name="Brown E.D."/>
            <person name="Doig P.C."/>
            <person name="Smith D.R."/>
            <person name="Noonan B."/>
            <person name="Guild B.C."/>
            <person name="deJonge B.L."/>
            <person name="Carmel G."/>
            <person name="Tummino P.J."/>
            <person name="Caruso A."/>
            <person name="Uria-Nickelsen M."/>
            <person name="Mills D.M."/>
            <person name="Ives C."/>
            <person name="Gibson R."/>
            <person name="Merberg D."/>
            <person name="Mills S.D."/>
            <person name="Jiang Q."/>
            <person name="Taylor D.E."/>
            <person name="Vovis G.F."/>
            <person name="Trust T.J."/>
        </authorList>
    </citation>
    <scope>NUCLEOTIDE SEQUENCE [LARGE SCALE GENOMIC DNA]</scope>
    <source>
        <strain>J99 / ATCC 700824</strain>
    </source>
</reference>
<feature type="chain" id="PRO_0000110435" description="Beta-ketoacyl-[acyl-carrier-protein] synthase III">
    <location>
        <begin position="1"/>
        <end position="331"/>
    </location>
</feature>
<feature type="region of interest" description="ACP-binding" evidence="1">
    <location>
        <begin position="256"/>
        <end position="260"/>
    </location>
</feature>
<feature type="active site" evidence="1">
    <location>
        <position position="115"/>
    </location>
</feature>
<feature type="active site" evidence="1">
    <location>
        <position position="255"/>
    </location>
</feature>
<feature type="active site" evidence="1">
    <location>
        <position position="285"/>
    </location>
</feature>
<organism>
    <name type="scientific">Helicobacter pylori (strain J99 / ATCC 700824)</name>
    <name type="common">Campylobacter pylori J99</name>
    <dbReference type="NCBI Taxonomy" id="85963"/>
    <lineage>
        <taxon>Bacteria</taxon>
        <taxon>Pseudomonadati</taxon>
        <taxon>Campylobacterota</taxon>
        <taxon>Epsilonproteobacteria</taxon>
        <taxon>Campylobacterales</taxon>
        <taxon>Helicobacteraceae</taxon>
        <taxon>Helicobacter</taxon>
    </lineage>
</organism>
<gene>
    <name evidence="1" type="primary">fabH</name>
    <name type="ordered locus">jhp_0188</name>
</gene>
<protein>
    <recommendedName>
        <fullName evidence="1">Beta-ketoacyl-[acyl-carrier-protein] synthase III</fullName>
        <shortName evidence="1">Beta-ketoacyl-ACP synthase III</shortName>
        <shortName evidence="1">KAS III</shortName>
        <ecNumber evidence="1">2.3.1.180</ecNumber>
    </recommendedName>
    <alternativeName>
        <fullName evidence="1">3-oxoacyl-[acyl-carrier-protein] synthase 3</fullName>
    </alternativeName>
    <alternativeName>
        <fullName evidence="1">3-oxoacyl-[acyl-carrier-protein] synthase III</fullName>
    </alternativeName>
</protein>
<dbReference type="EC" id="2.3.1.180" evidence="1"/>
<dbReference type="EMBL" id="AE001439">
    <property type="protein sequence ID" value="AAD05771.1"/>
    <property type="molecule type" value="Genomic_DNA"/>
</dbReference>
<dbReference type="PIR" id="C71962">
    <property type="entry name" value="C71962"/>
</dbReference>
<dbReference type="RefSeq" id="WP_000397804.1">
    <property type="nucleotide sequence ID" value="NC_000921.1"/>
</dbReference>
<dbReference type="SMR" id="Q9ZMN0"/>
<dbReference type="KEGG" id="hpj:jhp_0188"/>
<dbReference type="eggNOG" id="COG0332">
    <property type="taxonomic scope" value="Bacteria"/>
</dbReference>
<dbReference type="UniPathway" id="UPA00094"/>
<dbReference type="Proteomes" id="UP000000804">
    <property type="component" value="Chromosome"/>
</dbReference>
<dbReference type="GO" id="GO:0005737">
    <property type="term" value="C:cytoplasm"/>
    <property type="evidence" value="ECO:0007669"/>
    <property type="project" value="UniProtKB-SubCell"/>
</dbReference>
<dbReference type="GO" id="GO:0004315">
    <property type="term" value="F:3-oxoacyl-[acyl-carrier-protein] synthase activity"/>
    <property type="evidence" value="ECO:0007669"/>
    <property type="project" value="InterPro"/>
</dbReference>
<dbReference type="GO" id="GO:0033818">
    <property type="term" value="F:beta-ketoacyl-acyl-carrier-protein synthase III activity"/>
    <property type="evidence" value="ECO:0007669"/>
    <property type="project" value="UniProtKB-UniRule"/>
</dbReference>
<dbReference type="GO" id="GO:0006633">
    <property type="term" value="P:fatty acid biosynthetic process"/>
    <property type="evidence" value="ECO:0007669"/>
    <property type="project" value="UniProtKB-UniRule"/>
</dbReference>
<dbReference type="GO" id="GO:0044550">
    <property type="term" value="P:secondary metabolite biosynthetic process"/>
    <property type="evidence" value="ECO:0007669"/>
    <property type="project" value="TreeGrafter"/>
</dbReference>
<dbReference type="CDD" id="cd00830">
    <property type="entry name" value="KAS_III"/>
    <property type="match status" value="1"/>
</dbReference>
<dbReference type="FunFam" id="3.40.47.10:FF:000004">
    <property type="entry name" value="3-oxoacyl-[acyl-carrier-protein] synthase 3"/>
    <property type="match status" value="1"/>
</dbReference>
<dbReference type="Gene3D" id="3.40.47.10">
    <property type="match status" value="1"/>
</dbReference>
<dbReference type="HAMAP" id="MF_01815">
    <property type="entry name" value="FabH"/>
    <property type="match status" value="1"/>
</dbReference>
<dbReference type="InterPro" id="IPR013747">
    <property type="entry name" value="ACP_syn_III_C"/>
</dbReference>
<dbReference type="InterPro" id="IPR013751">
    <property type="entry name" value="ACP_syn_III_N"/>
</dbReference>
<dbReference type="InterPro" id="IPR004655">
    <property type="entry name" value="FabH"/>
</dbReference>
<dbReference type="InterPro" id="IPR016039">
    <property type="entry name" value="Thiolase-like"/>
</dbReference>
<dbReference type="NCBIfam" id="TIGR00747">
    <property type="entry name" value="fabH"/>
    <property type="match status" value="1"/>
</dbReference>
<dbReference type="NCBIfam" id="NF006829">
    <property type="entry name" value="PRK09352.1"/>
    <property type="match status" value="1"/>
</dbReference>
<dbReference type="PANTHER" id="PTHR34069">
    <property type="entry name" value="3-OXOACYL-[ACYL-CARRIER-PROTEIN] SYNTHASE 3"/>
    <property type="match status" value="1"/>
</dbReference>
<dbReference type="PANTHER" id="PTHR34069:SF2">
    <property type="entry name" value="BETA-KETOACYL-[ACYL-CARRIER-PROTEIN] SYNTHASE III"/>
    <property type="match status" value="1"/>
</dbReference>
<dbReference type="Pfam" id="PF08545">
    <property type="entry name" value="ACP_syn_III"/>
    <property type="match status" value="1"/>
</dbReference>
<dbReference type="Pfam" id="PF08541">
    <property type="entry name" value="ACP_syn_III_C"/>
    <property type="match status" value="1"/>
</dbReference>
<dbReference type="SUPFAM" id="SSF53901">
    <property type="entry name" value="Thiolase-like"/>
    <property type="match status" value="1"/>
</dbReference>
<evidence type="ECO:0000255" key="1">
    <source>
        <dbReference type="HAMAP-Rule" id="MF_01815"/>
    </source>
</evidence>
<proteinExistence type="inferred from homology"/>
<sequence length="331" mass="36576">MEFYASLKSIAMHVPSERVKNAEFQQFLDTSDEWIEKRTGIKERRFANDEEKSSDLGVIAAKQAIERAHLTPQDIDLVVVATLSPDFLAMPSTACVLSAKLGIENKPAFDISAACTGFIYLLSVAKAYVESGMYENVLIVGAEKTSSVLDFKDRGTCILFGDGAGACVIGRTKRLKESVLDVQISANGNFSNYLYTPRTLKPTPFNAKEEALEPFLRMKGNEVFKLAVKTLLKDVETILEKNALKPEDVRLFIPHQANFRIIQAVREHLDFKDEQVVLTVHKYGNTSAASIPMAMCEAYEEGRLKKGDLMLLDAFGGGLTWGSALVYFGGI</sequence>
<name>FABH_HELPJ</name>